<sequence>MKNAFKDALKAGRPQIGLWLGLANSYSAELVAGAGFDWLLIDGEHAPNNVQTVLTQLQAIAPYPSQPVVRPSWNDPVQIKQLLDVGAQTLLVPMVQNADEARDAVAATRYPPAGIRGVGSALARASRWNRIPDYLHEANDAMCVLVQIETREAMSNLASILDVDGIDGVFIGPADLSADMGFAGNPQHPAVQAAIENAIVQIRAAGKAPGILMANEALAKRYLELGALFVAVGVDTTLLARGAEALAARFGAEKKLSGASGVY</sequence>
<evidence type="ECO:0000255" key="1">
    <source>
        <dbReference type="HAMAP-Rule" id="MF_01292"/>
    </source>
</evidence>
<organism>
    <name type="scientific">Salmonella arizonae (strain ATCC BAA-731 / CDC346-86 / RSK2980)</name>
    <dbReference type="NCBI Taxonomy" id="41514"/>
    <lineage>
        <taxon>Bacteria</taxon>
        <taxon>Pseudomonadati</taxon>
        <taxon>Pseudomonadota</taxon>
        <taxon>Gammaproteobacteria</taxon>
        <taxon>Enterobacterales</taxon>
        <taxon>Enterobacteriaceae</taxon>
        <taxon>Salmonella</taxon>
    </lineage>
</organism>
<name>HPCH_SALAR</name>
<gene>
    <name evidence="1" type="primary">hpcH</name>
    <name evidence="1" type="synonym">hpaI</name>
    <name type="ordered locus">SARI_01895</name>
</gene>
<proteinExistence type="inferred from homology"/>
<accession>A9MH59</accession>
<protein>
    <recommendedName>
        <fullName evidence="1">4-hydroxy-2-oxo-heptane-1,7-dioate aldolase</fullName>
        <ecNumber evidence="1">4.1.2.52</ecNumber>
    </recommendedName>
    <alternativeName>
        <fullName evidence="1">2,4-dihydroxyhept-2-ene-1,7-dioic acid aldolase</fullName>
        <shortName evidence="1">HHED aldolase</shortName>
    </alternativeName>
    <alternativeName>
        <fullName evidence="1">4-hydroxy-2-ketoheptane-1,7-dioate aldolase</fullName>
        <shortName evidence="1">HKHD aldolase</shortName>
    </alternativeName>
</protein>
<feature type="chain" id="PRO_0000355106" description="4-hydroxy-2-oxo-heptane-1,7-dioate aldolase">
    <location>
        <begin position="1"/>
        <end position="263"/>
    </location>
</feature>
<feature type="active site" description="Proton acceptor" evidence="1">
    <location>
        <position position="45"/>
    </location>
</feature>
<feature type="binding site" evidence="1">
    <location>
        <position position="147"/>
    </location>
    <ligand>
        <name>substrate</name>
    </ligand>
</feature>
<feature type="binding site" evidence="1">
    <location>
        <position position="149"/>
    </location>
    <ligand>
        <name>a divalent metal cation</name>
        <dbReference type="ChEBI" id="CHEBI:60240"/>
    </ligand>
</feature>
<feature type="binding site" evidence="1">
    <location>
        <position position="174"/>
    </location>
    <ligand>
        <name>substrate</name>
    </ligand>
</feature>
<feature type="binding site" evidence="1">
    <location>
        <position position="175"/>
    </location>
    <ligand>
        <name>a divalent metal cation</name>
        <dbReference type="ChEBI" id="CHEBI:60240"/>
    </ligand>
</feature>
<feature type="binding site" evidence="1">
    <location>
        <position position="175"/>
    </location>
    <ligand>
        <name>substrate</name>
    </ligand>
</feature>
<feature type="site" description="Transition state stabilizer" evidence="1">
    <location>
        <position position="70"/>
    </location>
</feature>
<feature type="site" description="Increases basicity of active site His" evidence="1">
    <location>
        <position position="84"/>
    </location>
</feature>
<dbReference type="EC" id="4.1.2.52" evidence="1"/>
<dbReference type="EMBL" id="CP000880">
    <property type="protein sequence ID" value="ABX21778.1"/>
    <property type="molecule type" value="Genomic_DNA"/>
</dbReference>
<dbReference type="SMR" id="A9MH59"/>
<dbReference type="STRING" id="41514.SARI_01895"/>
<dbReference type="KEGG" id="ses:SARI_01895"/>
<dbReference type="HOGENOM" id="CLU_059964_1_0_6"/>
<dbReference type="UniPathway" id="UPA00208">
    <property type="reaction ID" value="UER00422"/>
</dbReference>
<dbReference type="Proteomes" id="UP000002084">
    <property type="component" value="Chromosome"/>
</dbReference>
<dbReference type="GO" id="GO:0005737">
    <property type="term" value="C:cytoplasm"/>
    <property type="evidence" value="ECO:0007669"/>
    <property type="project" value="TreeGrafter"/>
</dbReference>
<dbReference type="GO" id="GO:0043863">
    <property type="term" value="F:4-hydroxy-2-ketopimelate aldolase activity"/>
    <property type="evidence" value="ECO:0007669"/>
    <property type="project" value="RHEA"/>
</dbReference>
<dbReference type="GO" id="GO:0046872">
    <property type="term" value="F:metal ion binding"/>
    <property type="evidence" value="ECO:0007669"/>
    <property type="project" value="UniProtKB-UniRule"/>
</dbReference>
<dbReference type="GO" id="GO:1901023">
    <property type="term" value="P:4-hydroxyphenylacetate catabolic process"/>
    <property type="evidence" value="ECO:0007669"/>
    <property type="project" value="UniProtKB-UniRule"/>
</dbReference>
<dbReference type="GO" id="GO:0010124">
    <property type="term" value="P:phenylacetate catabolic process"/>
    <property type="evidence" value="ECO:0007669"/>
    <property type="project" value="InterPro"/>
</dbReference>
<dbReference type="FunFam" id="3.20.20.60:FF:000004">
    <property type="entry name" value="5-keto-4-deoxy-D-glucarate aldolase"/>
    <property type="match status" value="1"/>
</dbReference>
<dbReference type="Gene3D" id="3.20.20.60">
    <property type="entry name" value="Phosphoenolpyruvate-binding domains"/>
    <property type="match status" value="1"/>
</dbReference>
<dbReference type="HAMAP" id="MF_01292">
    <property type="entry name" value="HKHD_aldolase"/>
    <property type="match status" value="1"/>
</dbReference>
<dbReference type="InterPro" id="IPR005000">
    <property type="entry name" value="Aldolase/citrate-lyase_domain"/>
</dbReference>
<dbReference type="InterPro" id="IPR023701">
    <property type="entry name" value="HKHD_aldolase_ent"/>
</dbReference>
<dbReference type="InterPro" id="IPR012689">
    <property type="entry name" value="HpaI"/>
</dbReference>
<dbReference type="InterPro" id="IPR050251">
    <property type="entry name" value="HpcH-HpaI_aldolase"/>
</dbReference>
<dbReference type="InterPro" id="IPR015813">
    <property type="entry name" value="Pyrv/PenolPyrv_kinase-like_dom"/>
</dbReference>
<dbReference type="InterPro" id="IPR040442">
    <property type="entry name" value="Pyrv_kinase-like_dom_sf"/>
</dbReference>
<dbReference type="NCBIfam" id="TIGR02311">
    <property type="entry name" value="HpaI"/>
    <property type="match status" value="1"/>
</dbReference>
<dbReference type="PANTHER" id="PTHR30502">
    <property type="entry name" value="2-KETO-3-DEOXY-L-RHAMNONATE ALDOLASE"/>
    <property type="match status" value="1"/>
</dbReference>
<dbReference type="PANTHER" id="PTHR30502:SF0">
    <property type="entry name" value="PHOSPHOENOLPYRUVATE CARBOXYLASE FAMILY PROTEIN"/>
    <property type="match status" value="1"/>
</dbReference>
<dbReference type="Pfam" id="PF03328">
    <property type="entry name" value="HpcH_HpaI"/>
    <property type="match status" value="1"/>
</dbReference>
<dbReference type="SUPFAM" id="SSF51621">
    <property type="entry name" value="Phosphoenolpyruvate/pyruvate domain"/>
    <property type="match status" value="1"/>
</dbReference>
<reference key="1">
    <citation type="submission" date="2007-11" db="EMBL/GenBank/DDBJ databases">
        <authorList>
            <consortium name="The Salmonella enterica serovar Arizonae Genome Sequencing Project"/>
            <person name="McClelland M."/>
            <person name="Sanderson E.K."/>
            <person name="Porwollik S."/>
            <person name="Spieth J."/>
            <person name="Clifton W.S."/>
            <person name="Fulton R."/>
            <person name="Chunyan W."/>
            <person name="Wollam A."/>
            <person name="Shah N."/>
            <person name="Pepin K."/>
            <person name="Bhonagiri V."/>
            <person name="Nash W."/>
            <person name="Johnson M."/>
            <person name="Thiruvilangam P."/>
            <person name="Wilson R."/>
        </authorList>
    </citation>
    <scope>NUCLEOTIDE SEQUENCE [LARGE SCALE GENOMIC DNA]</scope>
    <source>
        <strain>ATCC BAA-731 / CDC346-86 / RSK2980</strain>
    </source>
</reference>
<comment type="function">
    <text evidence="1">Catalyzes the reversible retro-aldol cleavage of 4-hydroxy-2-ketoheptane-1,7-dioate (HKHD) to pyruvate and succinic semialdehyde.</text>
</comment>
<comment type="catalytic activity">
    <reaction evidence="1">
        <text>4-hydroxy-2-oxoheptanedioate = succinate semialdehyde + pyruvate</text>
        <dbReference type="Rhea" id="RHEA:25788"/>
        <dbReference type="ChEBI" id="CHEBI:15361"/>
        <dbReference type="ChEBI" id="CHEBI:57706"/>
        <dbReference type="ChEBI" id="CHEBI:73036"/>
        <dbReference type="EC" id="4.1.2.52"/>
    </reaction>
</comment>
<comment type="cofactor">
    <cofactor evidence="1">
        <name>a divalent metal cation</name>
        <dbReference type="ChEBI" id="CHEBI:60240"/>
    </cofactor>
    <text evidence="1">Binds 1 divalent metal cation per subunit.</text>
</comment>
<comment type="pathway">
    <text evidence="1">Aromatic compound metabolism; 4-hydroxyphenylacetate degradation; pyruvate and succinate semialdehyde from 4-hydroxyphenylacetate: step 7/7.</text>
</comment>
<comment type="subunit">
    <text evidence="1">Homohexamer; trimer of dimers.</text>
</comment>
<comment type="similarity">
    <text evidence="1">Belongs to the HpcH/HpaI aldolase family.</text>
</comment>
<keyword id="KW-0058">Aromatic hydrocarbons catabolism</keyword>
<keyword id="KW-0456">Lyase</keyword>
<keyword id="KW-0479">Metal-binding</keyword>
<keyword id="KW-1185">Reference proteome</keyword>